<proteinExistence type="predicted"/>
<accession>P70796</accession>
<keyword id="KW-0614">Plasmid</keyword>
<reference key="1">
    <citation type="journal article" date="1996" name="Mol. Plant Microbe Interact.">
        <title>Characterization and distribution of tartrate utilization genes in the grapevine pathogen Agrobacterium vitis.</title>
        <authorList>
            <person name="Salomone J.-Y."/>
            <person name="Crouzet P."/>
            <person name="de Ruffray P."/>
            <person name="Otten L."/>
        </authorList>
    </citation>
    <scope>NUCLEOTIDE SEQUENCE [GENOMIC DNA]</scope>
    <source>
        <strain>AB3</strain>
    </source>
</reference>
<geneLocation type="plasmid">
    <name>pTrAB3</name>
</geneLocation>
<organism>
    <name type="scientific">Agrobacterium vitis</name>
    <name type="common">Rhizobium vitis</name>
    <dbReference type="NCBI Taxonomy" id="373"/>
    <lineage>
        <taxon>Bacteria</taxon>
        <taxon>Pseudomonadati</taxon>
        <taxon>Pseudomonadota</taxon>
        <taxon>Alphaproteobacteria</taxon>
        <taxon>Hyphomicrobiales</taxon>
        <taxon>Rhizobiaceae</taxon>
        <taxon>Rhizobium/Agrobacterium group</taxon>
        <taxon>Agrobacterium</taxon>
    </lineage>
</organism>
<sequence length="280" mass="31572">MFRKVLFGRIAGKRRQDMATAGQYAENRAEDSAADHRSGDPAKIFLAEPEVHHPLDADFAIALVLEIAEDLGDAEHANRDGDEIDAFGKFHLSEGEPFLAGIDVLPDRAEKQAHDDHPERLQNRSVRQRNGDKKTEHDQCEIFRCSELQRHRGERRSGNCQQQGRHATGEERAECGRRQRLSGSALAGHLVAIDRRHGRRTLSWQVDQNGRGRAAILGTIIDARQHDQRGDRRKGEGDRQKHGDRRGRPDARKNADQRPQQDADEAPDDVDRSKSCLEAE</sequence>
<name>YTZ4_AGRVI</name>
<dbReference type="EMBL" id="U32375">
    <property type="protein sequence ID" value="AAB61632.1"/>
    <property type="molecule type" value="Genomic_DNA"/>
</dbReference>
<dbReference type="SMR" id="P70796"/>
<feature type="chain" id="PRO_0000066541" description="Uncharacterized 31.6 kDa protein in TAR-I ttuC' 3'region">
    <location>
        <begin position="1"/>
        <end position="280"/>
    </location>
</feature>
<feature type="region of interest" description="Disordered" evidence="1">
    <location>
        <begin position="110"/>
        <end position="137"/>
    </location>
</feature>
<feature type="region of interest" description="Disordered" evidence="1">
    <location>
        <begin position="151"/>
        <end position="177"/>
    </location>
</feature>
<feature type="region of interest" description="Disordered" evidence="1">
    <location>
        <begin position="219"/>
        <end position="280"/>
    </location>
</feature>
<feature type="compositionally biased region" description="Basic and acidic residues" evidence="1">
    <location>
        <begin position="110"/>
        <end position="122"/>
    </location>
</feature>
<feature type="compositionally biased region" description="Basic and acidic residues" evidence="1">
    <location>
        <begin position="167"/>
        <end position="177"/>
    </location>
</feature>
<feature type="compositionally biased region" description="Basic and acidic residues" evidence="1">
    <location>
        <begin position="223"/>
        <end position="261"/>
    </location>
</feature>
<feature type="compositionally biased region" description="Basic and acidic residues" evidence="1">
    <location>
        <begin position="269"/>
        <end position="280"/>
    </location>
</feature>
<evidence type="ECO:0000256" key="1">
    <source>
        <dbReference type="SAM" id="MobiDB-lite"/>
    </source>
</evidence>
<protein>
    <recommendedName>
        <fullName>Uncharacterized 31.6 kDa protein in TAR-I ttuC' 3'region</fullName>
    </recommendedName>
    <alternativeName>
        <fullName>ORFZ4</fullName>
    </alternativeName>
</protein>